<sequence length="90" mass="10882">MKKKGGRKIFGFMVKEEKEENWGSVEFQVFSFTNKIRRLASHLELHKKDFSSERGLRRLLGKRQRLLAYLAKKNRVRYKKLISQLDIRER</sequence>
<dbReference type="EMBL" id="X15901">
    <property type="protein sequence ID" value="CAA33948.1"/>
    <property type="molecule type" value="Genomic_DNA"/>
</dbReference>
<dbReference type="EMBL" id="X15901">
    <property type="protein sequence ID" value="CAA33912.1"/>
    <property type="molecule type" value="Genomic_DNA"/>
</dbReference>
<dbReference type="EMBL" id="AY522330">
    <property type="protein sequence ID" value="AAS46152.1"/>
    <property type="molecule type" value="Genomic_DNA"/>
</dbReference>
<dbReference type="EMBL" id="AY522330">
    <property type="protein sequence ID" value="AAS46163.1"/>
    <property type="molecule type" value="Genomic_DNA"/>
</dbReference>
<dbReference type="PIR" id="JQ0284">
    <property type="entry name" value="R3RZ15"/>
</dbReference>
<dbReference type="SMR" id="P0C470"/>
<dbReference type="BioGRID" id="792805">
    <property type="interactions" value="1"/>
</dbReference>
<dbReference type="BioGRID" id="792806">
    <property type="interactions" value="1"/>
</dbReference>
<dbReference type="FunCoup" id="P0C470">
    <property type="interactions" value="200"/>
</dbReference>
<dbReference type="STRING" id="39947.P0C470"/>
<dbReference type="PaxDb" id="39947-P0C470"/>
<dbReference type="EnsemblPlants" id="transcript-rps15">
    <property type="protein sequence ID" value="cds-CAA33948.1"/>
    <property type="gene ID" value="gene-rps15"/>
</dbReference>
<dbReference type="EnsemblPlants" id="transcript-rps15-2">
    <property type="protein sequence ID" value="cds-CAA33912.1"/>
    <property type="gene ID" value="gene-rps15-2"/>
</dbReference>
<dbReference type="Gramene" id="transcript-rps15">
    <property type="protein sequence ID" value="cds-CAA33948.1"/>
    <property type="gene ID" value="gene-rps15"/>
</dbReference>
<dbReference type="Gramene" id="transcript-rps15-2">
    <property type="protein sequence ID" value="cds-CAA33912.1"/>
    <property type="gene ID" value="gene-rps15-2"/>
</dbReference>
<dbReference type="KEGG" id="dosa:rps15"/>
<dbReference type="KEGG" id="dosa:rps15.1"/>
<dbReference type="KEGG" id="osa:3131437"/>
<dbReference type="KEGG" id="osa:3131438"/>
<dbReference type="InParanoid" id="P0C470"/>
<dbReference type="OrthoDB" id="364880at2759"/>
<dbReference type="Proteomes" id="UP000059680">
    <property type="component" value="Chloroplast"/>
</dbReference>
<dbReference type="GO" id="GO:0009507">
    <property type="term" value="C:chloroplast"/>
    <property type="evidence" value="ECO:0007669"/>
    <property type="project" value="UniProtKB-SubCell"/>
</dbReference>
<dbReference type="GO" id="GO:0009536">
    <property type="term" value="C:plastid"/>
    <property type="evidence" value="ECO:0000305"/>
    <property type="project" value="Gramene"/>
</dbReference>
<dbReference type="GO" id="GO:1990904">
    <property type="term" value="C:ribonucleoprotein complex"/>
    <property type="evidence" value="ECO:0007669"/>
    <property type="project" value="UniProtKB-KW"/>
</dbReference>
<dbReference type="GO" id="GO:0005840">
    <property type="term" value="C:ribosome"/>
    <property type="evidence" value="ECO:0007669"/>
    <property type="project" value="UniProtKB-KW"/>
</dbReference>
<dbReference type="GO" id="GO:0003735">
    <property type="term" value="F:structural constituent of ribosome"/>
    <property type="evidence" value="ECO:0007669"/>
    <property type="project" value="InterPro"/>
</dbReference>
<dbReference type="GO" id="GO:0006412">
    <property type="term" value="P:translation"/>
    <property type="evidence" value="ECO:0007669"/>
    <property type="project" value="UniProtKB-UniRule"/>
</dbReference>
<dbReference type="CDD" id="cd00353">
    <property type="entry name" value="Ribosomal_S15p_S13e"/>
    <property type="match status" value="1"/>
</dbReference>
<dbReference type="Gene3D" id="1.10.287.10">
    <property type="entry name" value="S15/NS1, RNA-binding"/>
    <property type="match status" value="1"/>
</dbReference>
<dbReference type="HAMAP" id="MF_01343_B">
    <property type="entry name" value="Ribosomal_uS15_B"/>
    <property type="match status" value="1"/>
</dbReference>
<dbReference type="InterPro" id="IPR000589">
    <property type="entry name" value="Ribosomal_uS15"/>
</dbReference>
<dbReference type="InterPro" id="IPR005290">
    <property type="entry name" value="Ribosomal_uS15_bac-type"/>
</dbReference>
<dbReference type="InterPro" id="IPR009068">
    <property type="entry name" value="uS15_NS1_RNA-bd_sf"/>
</dbReference>
<dbReference type="NCBIfam" id="TIGR00952">
    <property type="entry name" value="S15_bact"/>
    <property type="match status" value="1"/>
</dbReference>
<dbReference type="PANTHER" id="PTHR23321">
    <property type="entry name" value="RIBOSOMAL PROTEIN S15, BACTERIAL AND ORGANELLAR"/>
    <property type="match status" value="1"/>
</dbReference>
<dbReference type="PANTHER" id="PTHR23321:SF26">
    <property type="entry name" value="SMALL RIBOSOMAL SUBUNIT PROTEIN US15M"/>
    <property type="match status" value="1"/>
</dbReference>
<dbReference type="Pfam" id="PF00312">
    <property type="entry name" value="Ribosomal_S15"/>
    <property type="match status" value="1"/>
</dbReference>
<dbReference type="SMART" id="SM01387">
    <property type="entry name" value="Ribosomal_S15"/>
    <property type="match status" value="1"/>
</dbReference>
<dbReference type="SUPFAM" id="SSF47060">
    <property type="entry name" value="S15/NS1 RNA-binding domain"/>
    <property type="match status" value="1"/>
</dbReference>
<dbReference type="PROSITE" id="PS00362">
    <property type="entry name" value="RIBOSOMAL_S15"/>
    <property type="match status" value="1"/>
</dbReference>
<proteinExistence type="inferred from homology"/>
<protein>
    <recommendedName>
        <fullName evidence="2">Small ribosomal subunit protein uS15c</fullName>
    </recommendedName>
    <alternativeName>
        <fullName>30S ribosomal protein S15, chloroplastic</fullName>
    </alternativeName>
</protein>
<reference key="1">
    <citation type="journal article" date="1989" name="Mol. Gen. Genet.">
        <title>The complete sequence of the rice (Oryza sativa) chloroplast genome: intermolecular recombination between distinct tRNA genes accounts for a major plastid DNA inversion during the evolution of the cereals.</title>
        <authorList>
            <person name="Hiratsuka J."/>
            <person name="Shimada H."/>
            <person name="Whittier R."/>
            <person name="Ishibashi T."/>
            <person name="Sakamoto M."/>
            <person name="Mori M."/>
            <person name="Kondo C."/>
            <person name="Honji Y."/>
            <person name="Sun C.-R."/>
            <person name="Meng B.-Y."/>
            <person name="Li Y.-Q."/>
            <person name="Kanno A."/>
            <person name="Nishizawa Y."/>
            <person name="Hirai A."/>
            <person name="Shinozaki K."/>
            <person name="Sugiura M."/>
        </authorList>
    </citation>
    <scope>NUCLEOTIDE SEQUENCE [LARGE SCALE GENOMIC DNA]</scope>
    <source>
        <strain>cv. Nipponbare</strain>
    </source>
</reference>
<reference key="2">
    <citation type="journal article" date="2004" name="Plant Physiol.">
        <title>A comparison of rice chloroplast genomes.</title>
        <authorList>
            <person name="Tang J."/>
            <person name="Xia H."/>
            <person name="Cao M."/>
            <person name="Zhang X."/>
            <person name="Zeng W."/>
            <person name="Hu S."/>
            <person name="Tong W."/>
            <person name="Wang J."/>
            <person name="Wang J."/>
            <person name="Yu J."/>
            <person name="Yang H."/>
            <person name="Zhu L."/>
        </authorList>
    </citation>
    <scope>NUCLEOTIDE SEQUENCE [LARGE SCALE GENOMIC DNA]</scope>
    <source>
        <strain>cv. Nipponbare</strain>
    </source>
</reference>
<comment type="subunit">
    <text evidence="1">Part of the 30S ribosomal subunit.</text>
</comment>
<comment type="subcellular location">
    <subcellularLocation>
        <location>Plastid</location>
        <location>Chloroplast</location>
    </subcellularLocation>
</comment>
<comment type="similarity">
    <text evidence="2">Belongs to the universal ribosomal protein uS15 family.</text>
</comment>
<evidence type="ECO:0000250" key="1"/>
<evidence type="ECO:0000305" key="2"/>
<name>RR15_ORYSJ</name>
<keyword id="KW-0150">Chloroplast</keyword>
<keyword id="KW-0934">Plastid</keyword>
<keyword id="KW-1185">Reference proteome</keyword>
<keyword id="KW-0687">Ribonucleoprotein</keyword>
<keyword id="KW-0689">Ribosomal protein</keyword>
<geneLocation type="chloroplast"/>
<accession>P0C470</accession>
<accession>P12150</accession>
<accession>Q6QXX9</accession>
<accession>Q6QY31</accession>
<organism>
    <name type="scientific">Oryza sativa subsp. japonica</name>
    <name type="common">Rice</name>
    <dbReference type="NCBI Taxonomy" id="39947"/>
    <lineage>
        <taxon>Eukaryota</taxon>
        <taxon>Viridiplantae</taxon>
        <taxon>Streptophyta</taxon>
        <taxon>Embryophyta</taxon>
        <taxon>Tracheophyta</taxon>
        <taxon>Spermatophyta</taxon>
        <taxon>Magnoliopsida</taxon>
        <taxon>Liliopsida</taxon>
        <taxon>Poales</taxon>
        <taxon>Poaceae</taxon>
        <taxon>BOP clade</taxon>
        <taxon>Oryzoideae</taxon>
        <taxon>Oryzeae</taxon>
        <taxon>Oryzinae</taxon>
        <taxon>Oryza</taxon>
        <taxon>Oryza sativa</taxon>
    </lineage>
</organism>
<gene>
    <name type="primary">rps15-A</name>
    <name type="ordered locus">LOC_Osp1g00870</name>
    <name type="ORF">Nip162</name>
</gene>
<gene>
    <name type="primary">rps15-B</name>
    <name type="ORF">Nip178</name>
</gene>
<feature type="chain" id="PRO_0000290065" description="Small ribosomal subunit protein uS15c">
    <location>
        <begin position="1"/>
        <end position="90"/>
    </location>
</feature>